<evidence type="ECO:0000255" key="1">
    <source>
        <dbReference type="HAMAP-Rule" id="MF_04204"/>
    </source>
</evidence>
<protein>
    <recommendedName>
        <fullName evidence="1">Envelope small membrane protein</fullName>
        <shortName evidence="1">E protein</shortName>
        <shortName evidence="1">sM protein</shortName>
    </recommendedName>
</protein>
<accession>Q14EA8</accession>
<name>VEMP_CVHN2</name>
<organismHost>
    <name type="scientific">Homo sapiens</name>
    <name type="common">Human</name>
    <dbReference type="NCBI Taxonomy" id="9606"/>
</organismHost>
<keyword id="KW-0053">Apoptosis</keyword>
<keyword id="KW-1040">Host Golgi apparatus</keyword>
<keyword id="KW-1043">Host membrane</keyword>
<keyword id="KW-0472">Membrane</keyword>
<keyword id="KW-0812">Transmembrane</keyword>
<keyword id="KW-1133">Transmembrane helix</keyword>
<gene>
    <name evidence="1" type="primary">E</name>
    <name type="synonym">sM</name>
    <name type="ORF">5</name>
</gene>
<feature type="chain" id="PRO_0000297813" description="Envelope small membrane protein">
    <location>
        <begin position="1"/>
        <end position="82"/>
    </location>
</feature>
<feature type="topological domain" description="Virion surface" evidence="1">
    <location>
        <begin position="1"/>
        <end position="16"/>
    </location>
</feature>
<feature type="transmembrane region" description="Helical" evidence="1">
    <location>
        <begin position="17"/>
        <end position="37"/>
    </location>
</feature>
<feature type="topological domain" description="Intravirion" evidence="1">
    <location>
        <begin position="38"/>
        <end position="78"/>
    </location>
</feature>
<comment type="function">
    <text evidence="1">Plays a central role in virus morphogenesis and assembly. Acts as a viroporin and self-assembles in host membranes forming pentameric protein-lipid pores that allow ion transport. Also plays a role in the induction of apoptosis.</text>
</comment>
<comment type="subunit">
    <text evidence="1">Homopentamer. Interacts with membrane protein M in the budding compartment of the host cell, which is located between endoplasmic reticulum and the Golgi complex. Interacts with Nucleoprotein.</text>
</comment>
<comment type="subcellular location">
    <subcellularLocation>
        <location evidence="1">Host Golgi apparatus membrane</location>
        <topology evidence="1">Single-pass type III membrane protein</topology>
    </subcellularLocation>
    <text evidence="1">The cytoplasmic tail functions as a Golgi complex-targeting signal.</text>
</comment>
<comment type="miscellaneous">
    <text>Isolate N2 belongs to genotype B.</text>
</comment>
<comment type="similarity">
    <text evidence="1">Belongs to the betacoronaviruses E protein family.</text>
</comment>
<reference key="1">
    <citation type="journal article" date="2006" name="J. Virol.">
        <title>Comparative analysis of 22 coronavirus HKU1 genomes reveals a novel genotype and evidence of natural recombination in coronavirus HKU1.</title>
        <authorList>
            <person name="Woo P.C.Y."/>
            <person name="Lau S.K.P."/>
            <person name="Yip C.C.Y."/>
            <person name="Huang Y."/>
            <person name="Tsoi H.-W."/>
            <person name="Chan K.-H."/>
            <person name="Yuen K.-Y."/>
        </authorList>
    </citation>
    <scope>NUCLEOTIDE SEQUENCE [GENOMIC RNA]</scope>
</reference>
<dbReference type="EMBL" id="AY884001">
    <property type="protein sequence ID" value="AAX76523.1"/>
    <property type="molecule type" value="Genomic_RNA"/>
</dbReference>
<dbReference type="Proteomes" id="UP000006551">
    <property type="component" value="Genome"/>
</dbReference>
<dbReference type="GO" id="GO:0044178">
    <property type="term" value="C:host cell Golgi membrane"/>
    <property type="evidence" value="ECO:0007669"/>
    <property type="project" value="UniProtKB-SubCell"/>
</dbReference>
<dbReference type="GO" id="GO:0016020">
    <property type="term" value="C:membrane"/>
    <property type="evidence" value="ECO:0007669"/>
    <property type="project" value="UniProtKB-UniRule"/>
</dbReference>
<dbReference type="GO" id="GO:0140975">
    <property type="term" value="P:disruption of cellular anatomical structure in another organism"/>
    <property type="evidence" value="ECO:0007669"/>
    <property type="project" value="UniProtKB-UniRule"/>
</dbReference>
<dbReference type="GO" id="GO:0046760">
    <property type="term" value="P:viral budding from Golgi membrane"/>
    <property type="evidence" value="ECO:0007669"/>
    <property type="project" value="UniProtKB-UniRule"/>
</dbReference>
<dbReference type="CDD" id="cd21532">
    <property type="entry name" value="HKU1-CoV-like_E"/>
    <property type="match status" value="1"/>
</dbReference>
<dbReference type="Gene3D" id="6.10.250.1810">
    <property type="match status" value="1"/>
</dbReference>
<dbReference type="HAMAP" id="MF_04204">
    <property type="entry name" value="BETA_CORONA_E"/>
    <property type="match status" value="1"/>
</dbReference>
<dbReference type="InterPro" id="IPR043506">
    <property type="entry name" value="E_protein_bCoV"/>
</dbReference>
<dbReference type="InterPro" id="IPR003873">
    <property type="entry name" value="E_protein_CoV"/>
</dbReference>
<dbReference type="Pfam" id="PF02723">
    <property type="entry name" value="CoV_E"/>
    <property type="match status" value="1"/>
</dbReference>
<dbReference type="PROSITE" id="PS51926">
    <property type="entry name" value="COV_E"/>
    <property type="match status" value="1"/>
</dbReference>
<proteinExistence type="inferred from homology"/>
<organism>
    <name type="scientific">Human coronavirus HKU1 (isolate N2)</name>
    <name type="common">HCoV-HKU1</name>
    <dbReference type="NCBI Taxonomy" id="443240"/>
    <lineage>
        <taxon>Viruses</taxon>
        <taxon>Riboviria</taxon>
        <taxon>Orthornavirae</taxon>
        <taxon>Pisuviricota</taxon>
        <taxon>Pisoniviricetes</taxon>
        <taxon>Nidovirales</taxon>
        <taxon>Cornidovirineae</taxon>
        <taxon>Coronaviridae</taxon>
        <taxon>Orthocoronavirinae</taxon>
        <taxon>Betacoronavirus</taxon>
        <taxon>Embecovirus</taxon>
        <taxon>Human coronavirus HKU1</taxon>
    </lineage>
</organism>
<sequence length="82" mass="9381">MVDVFFTDTAWYVGQIFFLVLSCVIFLIFVVALLATIKLCIQICGFCNIFIISPSAYVYNRGRQLYKSYSEHVIPSTLDDLI</sequence>